<organism>
    <name type="scientific">Alcanivorax borkumensis (strain ATCC 700651 / DSM 11573 / NCIMB 13689 / SK2)</name>
    <dbReference type="NCBI Taxonomy" id="393595"/>
    <lineage>
        <taxon>Bacteria</taxon>
        <taxon>Pseudomonadati</taxon>
        <taxon>Pseudomonadota</taxon>
        <taxon>Gammaproteobacteria</taxon>
        <taxon>Oceanospirillales</taxon>
        <taxon>Alcanivoracaceae</taxon>
        <taxon>Alcanivorax</taxon>
    </lineage>
</organism>
<gene>
    <name evidence="1" type="primary">murD</name>
    <name type="ordered locus">ABO_0596</name>
</gene>
<accession>Q0VS04</accession>
<comment type="function">
    <text evidence="1">Cell wall formation. Catalyzes the addition of glutamate to the nucleotide precursor UDP-N-acetylmuramoyl-L-alanine (UMA).</text>
</comment>
<comment type="catalytic activity">
    <reaction evidence="1">
        <text>UDP-N-acetyl-alpha-D-muramoyl-L-alanine + D-glutamate + ATP = UDP-N-acetyl-alpha-D-muramoyl-L-alanyl-D-glutamate + ADP + phosphate + H(+)</text>
        <dbReference type="Rhea" id="RHEA:16429"/>
        <dbReference type="ChEBI" id="CHEBI:15378"/>
        <dbReference type="ChEBI" id="CHEBI:29986"/>
        <dbReference type="ChEBI" id="CHEBI:30616"/>
        <dbReference type="ChEBI" id="CHEBI:43474"/>
        <dbReference type="ChEBI" id="CHEBI:83898"/>
        <dbReference type="ChEBI" id="CHEBI:83900"/>
        <dbReference type="ChEBI" id="CHEBI:456216"/>
        <dbReference type="EC" id="6.3.2.9"/>
    </reaction>
</comment>
<comment type="pathway">
    <text evidence="1">Cell wall biogenesis; peptidoglycan biosynthesis.</text>
</comment>
<comment type="subcellular location">
    <subcellularLocation>
        <location evidence="1">Cytoplasm</location>
    </subcellularLocation>
</comment>
<comment type="similarity">
    <text evidence="1">Belongs to the MurCDEF family.</text>
</comment>
<feature type="chain" id="PRO_0000257163" description="UDP-N-acetylmuramoylalanine--D-glutamate ligase">
    <location>
        <begin position="1"/>
        <end position="441"/>
    </location>
</feature>
<feature type="binding site" evidence="1">
    <location>
        <begin position="113"/>
        <end position="119"/>
    </location>
    <ligand>
        <name>ATP</name>
        <dbReference type="ChEBI" id="CHEBI:30616"/>
    </ligand>
</feature>
<proteinExistence type="inferred from homology"/>
<name>MURD_ALCBS</name>
<dbReference type="EC" id="6.3.2.9" evidence="1"/>
<dbReference type="EMBL" id="AM286690">
    <property type="protein sequence ID" value="CAL16044.1"/>
    <property type="molecule type" value="Genomic_DNA"/>
</dbReference>
<dbReference type="RefSeq" id="WP_011587882.1">
    <property type="nucleotide sequence ID" value="NC_008260.1"/>
</dbReference>
<dbReference type="SMR" id="Q0VS04"/>
<dbReference type="STRING" id="393595.ABO_0596"/>
<dbReference type="KEGG" id="abo:ABO_0596"/>
<dbReference type="eggNOG" id="COG0771">
    <property type="taxonomic scope" value="Bacteria"/>
</dbReference>
<dbReference type="HOGENOM" id="CLU_032540_1_0_6"/>
<dbReference type="OrthoDB" id="9809796at2"/>
<dbReference type="UniPathway" id="UPA00219"/>
<dbReference type="Proteomes" id="UP000008871">
    <property type="component" value="Chromosome"/>
</dbReference>
<dbReference type="GO" id="GO:0005737">
    <property type="term" value="C:cytoplasm"/>
    <property type="evidence" value="ECO:0007669"/>
    <property type="project" value="UniProtKB-SubCell"/>
</dbReference>
<dbReference type="GO" id="GO:0005524">
    <property type="term" value="F:ATP binding"/>
    <property type="evidence" value="ECO:0007669"/>
    <property type="project" value="UniProtKB-UniRule"/>
</dbReference>
<dbReference type="GO" id="GO:0008764">
    <property type="term" value="F:UDP-N-acetylmuramoylalanine-D-glutamate ligase activity"/>
    <property type="evidence" value="ECO:0007669"/>
    <property type="project" value="UniProtKB-UniRule"/>
</dbReference>
<dbReference type="GO" id="GO:0051301">
    <property type="term" value="P:cell division"/>
    <property type="evidence" value="ECO:0007669"/>
    <property type="project" value="UniProtKB-KW"/>
</dbReference>
<dbReference type="GO" id="GO:0071555">
    <property type="term" value="P:cell wall organization"/>
    <property type="evidence" value="ECO:0007669"/>
    <property type="project" value="UniProtKB-KW"/>
</dbReference>
<dbReference type="GO" id="GO:0009252">
    <property type="term" value="P:peptidoglycan biosynthetic process"/>
    <property type="evidence" value="ECO:0007669"/>
    <property type="project" value="UniProtKB-UniRule"/>
</dbReference>
<dbReference type="GO" id="GO:0008360">
    <property type="term" value="P:regulation of cell shape"/>
    <property type="evidence" value="ECO:0007669"/>
    <property type="project" value="UniProtKB-KW"/>
</dbReference>
<dbReference type="Gene3D" id="3.90.190.20">
    <property type="entry name" value="Mur ligase, C-terminal domain"/>
    <property type="match status" value="1"/>
</dbReference>
<dbReference type="Gene3D" id="3.40.1190.10">
    <property type="entry name" value="Mur-like, catalytic domain"/>
    <property type="match status" value="1"/>
</dbReference>
<dbReference type="Gene3D" id="3.40.50.720">
    <property type="entry name" value="NAD(P)-binding Rossmann-like Domain"/>
    <property type="match status" value="1"/>
</dbReference>
<dbReference type="HAMAP" id="MF_00639">
    <property type="entry name" value="MurD"/>
    <property type="match status" value="1"/>
</dbReference>
<dbReference type="InterPro" id="IPR036565">
    <property type="entry name" value="Mur-like_cat_sf"/>
</dbReference>
<dbReference type="InterPro" id="IPR004101">
    <property type="entry name" value="Mur_ligase_C"/>
</dbReference>
<dbReference type="InterPro" id="IPR036615">
    <property type="entry name" value="Mur_ligase_C_dom_sf"/>
</dbReference>
<dbReference type="InterPro" id="IPR013221">
    <property type="entry name" value="Mur_ligase_cen"/>
</dbReference>
<dbReference type="InterPro" id="IPR005762">
    <property type="entry name" value="MurD"/>
</dbReference>
<dbReference type="NCBIfam" id="TIGR01087">
    <property type="entry name" value="murD"/>
    <property type="match status" value="1"/>
</dbReference>
<dbReference type="PANTHER" id="PTHR43692">
    <property type="entry name" value="UDP-N-ACETYLMURAMOYLALANINE--D-GLUTAMATE LIGASE"/>
    <property type="match status" value="1"/>
</dbReference>
<dbReference type="PANTHER" id="PTHR43692:SF1">
    <property type="entry name" value="UDP-N-ACETYLMURAMOYLALANINE--D-GLUTAMATE LIGASE"/>
    <property type="match status" value="1"/>
</dbReference>
<dbReference type="Pfam" id="PF02875">
    <property type="entry name" value="Mur_ligase_C"/>
    <property type="match status" value="1"/>
</dbReference>
<dbReference type="Pfam" id="PF08245">
    <property type="entry name" value="Mur_ligase_M"/>
    <property type="match status" value="1"/>
</dbReference>
<dbReference type="Pfam" id="PF21799">
    <property type="entry name" value="MurD-like_N"/>
    <property type="match status" value="1"/>
</dbReference>
<dbReference type="SUPFAM" id="SSF51984">
    <property type="entry name" value="MurCD N-terminal domain"/>
    <property type="match status" value="1"/>
</dbReference>
<dbReference type="SUPFAM" id="SSF53623">
    <property type="entry name" value="MurD-like peptide ligases, catalytic domain"/>
    <property type="match status" value="1"/>
</dbReference>
<dbReference type="SUPFAM" id="SSF53244">
    <property type="entry name" value="MurD-like peptide ligases, peptide-binding domain"/>
    <property type="match status" value="1"/>
</dbReference>
<reference key="1">
    <citation type="journal article" date="2006" name="Nat. Biotechnol.">
        <title>Genome sequence of the ubiquitous hydrocarbon-degrading marine bacterium Alcanivorax borkumensis.</title>
        <authorList>
            <person name="Schneiker S."/>
            <person name="Martins dos Santos V.A.P."/>
            <person name="Bartels D."/>
            <person name="Bekel T."/>
            <person name="Brecht M."/>
            <person name="Buhrmester J."/>
            <person name="Chernikova T.N."/>
            <person name="Denaro R."/>
            <person name="Ferrer M."/>
            <person name="Gertler C."/>
            <person name="Goesmann A."/>
            <person name="Golyshina O.V."/>
            <person name="Kaminski F."/>
            <person name="Khachane A.N."/>
            <person name="Lang S."/>
            <person name="Linke B."/>
            <person name="McHardy A.C."/>
            <person name="Meyer F."/>
            <person name="Nechitaylo T."/>
            <person name="Puehler A."/>
            <person name="Regenhardt D."/>
            <person name="Rupp O."/>
            <person name="Sabirova J.S."/>
            <person name="Selbitschka W."/>
            <person name="Yakimov M.M."/>
            <person name="Timmis K.N."/>
            <person name="Vorhoelter F.-J."/>
            <person name="Weidner S."/>
            <person name="Kaiser O."/>
            <person name="Golyshin P.N."/>
        </authorList>
    </citation>
    <scope>NUCLEOTIDE SEQUENCE [LARGE SCALE GENOMIC DNA]</scope>
    <source>
        <strain>ATCC 700651 / DSM 11573 / NCIMB 13689 / SK2</strain>
    </source>
</reference>
<protein>
    <recommendedName>
        <fullName evidence="1">UDP-N-acetylmuramoylalanine--D-glutamate ligase</fullName>
        <ecNumber evidence="1">6.3.2.9</ecNumber>
    </recommendedName>
    <alternativeName>
        <fullName evidence="1">D-glutamic acid-adding enzyme</fullName>
    </alternativeName>
    <alternativeName>
        <fullName evidence="1">UDP-N-acetylmuramoyl-L-alanyl-D-glutamate synthetase</fullName>
    </alternativeName>
</protein>
<keyword id="KW-0067">ATP-binding</keyword>
<keyword id="KW-0131">Cell cycle</keyword>
<keyword id="KW-0132">Cell division</keyword>
<keyword id="KW-0133">Cell shape</keyword>
<keyword id="KW-0961">Cell wall biogenesis/degradation</keyword>
<keyword id="KW-0963">Cytoplasm</keyword>
<keyword id="KW-0436">Ligase</keyword>
<keyword id="KW-0547">Nucleotide-binding</keyword>
<keyword id="KW-0573">Peptidoglycan synthesis</keyword>
<keyword id="KW-1185">Reference proteome</keyword>
<evidence type="ECO:0000255" key="1">
    <source>
        <dbReference type="HAMAP-Rule" id="MF_00639"/>
    </source>
</evidence>
<sequence>MAKDGFDLVIGLGVTGRSVIRYLTDQGMPVRAIDTRAEPVGLDALCADFPDLKVHTGGFKKGWMGKARRLIVSPGVAVSTPAIAEQVVDGKEVIGDIELFARAASEPLVAITGSNAKSTVTTLLGQVADACGMNPGIGGNLGVPALELLDDQARLYVLELSSFQLETTYSLSAEVATVLNVSQDHLDRYASFADYLAAKQRVYDGCQVAVWNRDDLATRPPATVARQISFGAHPEADYRLDSENGQLLCRGEPLLSLSELALTGHHNAMNILSVLAISDALSLNRDKALATVKTFTGLPHRCQLVAESGGVRWFNDSKATNVGATLAALTGIGESIEGKVILVAGGLGKGQDFSPLAEPARQYLRAALLMGEDRTTVAQGMSAAPCELVADMAVAVRRAHALAQPGDAVLLSPACASFDQYSGFAARGDDFTTRAQELCHD</sequence>